<proteinExistence type="inferred from homology"/>
<organism>
    <name type="scientific">Prochlorococcus marinus (strain NATL2A)</name>
    <dbReference type="NCBI Taxonomy" id="59920"/>
    <lineage>
        <taxon>Bacteria</taxon>
        <taxon>Bacillati</taxon>
        <taxon>Cyanobacteriota</taxon>
        <taxon>Cyanophyceae</taxon>
        <taxon>Synechococcales</taxon>
        <taxon>Prochlorococcaceae</taxon>
        <taxon>Prochlorococcus</taxon>
    </lineage>
</organism>
<evidence type="ECO:0000255" key="1">
    <source>
        <dbReference type="HAMAP-Rule" id="MF_00052"/>
    </source>
</evidence>
<evidence type="ECO:0000255" key="2">
    <source>
        <dbReference type="PROSITE-ProRule" id="PRU01319"/>
    </source>
</evidence>
<reference key="1">
    <citation type="journal article" date="2007" name="PLoS Genet.">
        <title>Patterns and implications of gene gain and loss in the evolution of Prochlorococcus.</title>
        <authorList>
            <person name="Kettler G.C."/>
            <person name="Martiny A.C."/>
            <person name="Huang K."/>
            <person name="Zucker J."/>
            <person name="Coleman M.L."/>
            <person name="Rodrigue S."/>
            <person name="Chen F."/>
            <person name="Lapidus A."/>
            <person name="Ferriera S."/>
            <person name="Johnson J."/>
            <person name="Steglich C."/>
            <person name="Church G.M."/>
            <person name="Richardson P."/>
            <person name="Chisholm S.W."/>
        </authorList>
    </citation>
    <scope>NUCLEOTIDE SEQUENCE [LARGE SCALE GENOMIC DNA]</scope>
    <source>
        <strain>NATL2A</strain>
    </source>
</reference>
<comment type="function">
    <text evidence="1">Endonuclease that specifically degrades the RNA of RNA-DNA hybrids.</text>
</comment>
<comment type="catalytic activity">
    <reaction evidence="1">
        <text>Endonucleolytic cleavage to 5'-phosphomonoester.</text>
        <dbReference type="EC" id="3.1.26.4"/>
    </reaction>
</comment>
<comment type="cofactor">
    <cofactor evidence="1">
        <name>Mn(2+)</name>
        <dbReference type="ChEBI" id="CHEBI:29035"/>
    </cofactor>
    <cofactor evidence="1">
        <name>Mg(2+)</name>
        <dbReference type="ChEBI" id="CHEBI:18420"/>
    </cofactor>
    <text evidence="1">Manganese or magnesium. Binds 1 divalent metal ion per monomer in the absence of substrate. May bind a second metal ion after substrate binding.</text>
</comment>
<comment type="subcellular location">
    <subcellularLocation>
        <location evidence="1">Cytoplasm</location>
    </subcellularLocation>
</comment>
<comment type="similarity">
    <text evidence="1">Belongs to the RNase HII family.</text>
</comment>
<gene>
    <name evidence="1" type="primary">rnhB</name>
    <name type="ordered locus">PMN2A_1068</name>
</gene>
<dbReference type="EC" id="3.1.26.4" evidence="1"/>
<dbReference type="EMBL" id="CP000095">
    <property type="protein sequence ID" value="AAZ58558.1"/>
    <property type="molecule type" value="Genomic_DNA"/>
</dbReference>
<dbReference type="RefSeq" id="WP_011295413.1">
    <property type="nucleotide sequence ID" value="NC_007335.2"/>
</dbReference>
<dbReference type="SMR" id="Q46IX0"/>
<dbReference type="STRING" id="59920.PMN2A_1068"/>
<dbReference type="KEGG" id="pmn:PMN2A_1068"/>
<dbReference type="HOGENOM" id="CLU_036532_3_1_3"/>
<dbReference type="OrthoDB" id="9803420at2"/>
<dbReference type="PhylomeDB" id="Q46IX0"/>
<dbReference type="Proteomes" id="UP000002535">
    <property type="component" value="Chromosome"/>
</dbReference>
<dbReference type="GO" id="GO:0005737">
    <property type="term" value="C:cytoplasm"/>
    <property type="evidence" value="ECO:0007669"/>
    <property type="project" value="UniProtKB-SubCell"/>
</dbReference>
<dbReference type="GO" id="GO:0032299">
    <property type="term" value="C:ribonuclease H2 complex"/>
    <property type="evidence" value="ECO:0007669"/>
    <property type="project" value="TreeGrafter"/>
</dbReference>
<dbReference type="GO" id="GO:0030145">
    <property type="term" value="F:manganese ion binding"/>
    <property type="evidence" value="ECO:0007669"/>
    <property type="project" value="UniProtKB-UniRule"/>
</dbReference>
<dbReference type="GO" id="GO:0003723">
    <property type="term" value="F:RNA binding"/>
    <property type="evidence" value="ECO:0007669"/>
    <property type="project" value="InterPro"/>
</dbReference>
<dbReference type="GO" id="GO:0004523">
    <property type="term" value="F:RNA-DNA hybrid ribonuclease activity"/>
    <property type="evidence" value="ECO:0007669"/>
    <property type="project" value="UniProtKB-UniRule"/>
</dbReference>
<dbReference type="GO" id="GO:0043137">
    <property type="term" value="P:DNA replication, removal of RNA primer"/>
    <property type="evidence" value="ECO:0007669"/>
    <property type="project" value="TreeGrafter"/>
</dbReference>
<dbReference type="GO" id="GO:0006298">
    <property type="term" value="P:mismatch repair"/>
    <property type="evidence" value="ECO:0007669"/>
    <property type="project" value="TreeGrafter"/>
</dbReference>
<dbReference type="CDD" id="cd07182">
    <property type="entry name" value="RNase_HII_bacteria_HII_like"/>
    <property type="match status" value="1"/>
</dbReference>
<dbReference type="Gene3D" id="3.30.420.10">
    <property type="entry name" value="Ribonuclease H-like superfamily/Ribonuclease H"/>
    <property type="match status" value="1"/>
</dbReference>
<dbReference type="HAMAP" id="MF_00052_B">
    <property type="entry name" value="RNase_HII_B"/>
    <property type="match status" value="1"/>
</dbReference>
<dbReference type="InterPro" id="IPR022898">
    <property type="entry name" value="RNase_HII"/>
</dbReference>
<dbReference type="InterPro" id="IPR001352">
    <property type="entry name" value="RNase_HII/HIII"/>
</dbReference>
<dbReference type="InterPro" id="IPR024567">
    <property type="entry name" value="RNase_HII/HIII_dom"/>
</dbReference>
<dbReference type="InterPro" id="IPR012337">
    <property type="entry name" value="RNaseH-like_sf"/>
</dbReference>
<dbReference type="InterPro" id="IPR036397">
    <property type="entry name" value="RNaseH_sf"/>
</dbReference>
<dbReference type="NCBIfam" id="NF000595">
    <property type="entry name" value="PRK00015.1-3"/>
    <property type="match status" value="1"/>
</dbReference>
<dbReference type="NCBIfam" id="NF010537">
    <property type="entry name" value="PRK13925.1"/>
    <property type="match status" value="1"/>
</dbReference>
<dbReference type="PANTHER" id="PTHR10954">
    <property type="entry name" value="RIBONUCLEASE H2 SUBUNIT A"/>
    <property type="match status" value="1"/>
</dbReference>
<dbReference type="PANTHER" id="PTHR10954:SF18">
    <property type="entry name" value="RIBONUCLEASE HII"/>
    <property type="match status" value="1"/>
</dbReference>
<dbReference type="Pfam" id="PF01351">
    <property type="entry name" value="RNase_HII"/>
    <property type="match status" value="1"/>
</dbReference>
<dbReference type="SUPFAM" id="SSF53098">
    <property type="entry name" value="Ribonuclease H-like"/>
    <property type="match status" value="1"/>
</dbReference>
<dbReference type="PROSITE" id="PS51975">
    <property type="entry name" value="RNASE_H_2"/>
    <property type="match status" value="1"/>
</dbReference>
<name>RNH2_PROMT</name>
<keyword id="KW-0963">Cytoplasm</keyword>
<keyword id="KW-0255">Endonuclease</keyword>
<keyword id="KW-0378">Hydrolase</keyword>
<keyword id="KW-0464">Manganese</keyword>
<keyword id="KW-0479">Metal-binding</keyword>
<keyword id="KW-0540">Nuclease</keyword>
<keyword id="KW-1185">Reference proteome</keyword>
<accession>Q46IX0</accession>
<sequence>MEDIKSLIAGVDEVGKGCLFGPVFAAAVILSKKNEIELLNQGLKDSKKLSQRQRHNLVPLIKTNSIAWTIGQASAREIDVMGIRDATEKAMLRALEKFSSPPDLILVDGILPIRLWPGKQKTQVRGESHFASIAAASVLAKETRDELIKRLARKYNCYGLEKNKGYGTEIHRTKLIKEGATKLHRKSFISRLKKN</sequence>
<feature type="chain" id="PRO_0000235750" description="Ribonuclease HII">
    <location>
        <begin position="1"/>
        <end position="195"/>
    </location>
</feature>
<feature type="domain" description="RNase H type-2" evidence="2">
    <location>
        <begin position="6"/>
        <end position="195"/>
    </location>
</feature>
<feature type="binding site" evidence="1">
    <location>
        <position position="12"/>
    </location>
    <ligand>
        <name>a divalent metal cation</name>
        <dbReference type="ChEBI" id="CHEBI:60240"/>
    </ligand>
</feature>
<feature type="binding site" evidence="1">
    <location>
        <position position="13"/>
    </location>
    <ligand>
        <name>a divalent metal cation</name>
        <dbReference type="ChEBI" id="CHEBI:60240"/>
    </ligand>
</feature>
<feature type="binding site" evidence="1">
    <location>
        <position position="108"/>
    </location>
    <ligand>
        <name>a divalent metal cation</name>
        <dbReference type="ChEBI" id="CHEBI:60240"/>
    </ligand>
</feature>
<protein>
    <recommendedName>
        <fullName evidence="1">Ribonuclease HII</fullName>
        <shortName evidence="1">RNase HII</shortName>
        <ecNumber evidence="1">3.1.26.4</ecNumber>
    </recommendedName>
</protein>